<gene>
    <name evidence="1" type="primary">rplY</name>
    <name type="ordered locus">c2722</name>
</gene>
<protein>
    <recommendedName>
        <fullName evidence="1">Large ribosomal subunit protein bL25</fullName>
    </recommendedName>
    <alternativeName>
        <fullName evidence="2">50S ribosomal protein L25</fullName>
    </alternativeName>
</protein>
<keyword id="KW-1185">Reference proteome</keyword>
<keyword id="KW-0687">Ribonucleoprotein</keyword>
<keyword id="KW-0689">Ribosomal protein</keyword>
<keyword id="KW-0694">RNA-binding</keyword>
<keyword id="KW-0699">rRNA-binding</keyword>
<name>RL25_ECOL6</name>
<reference key="1">
    <citation type="journal article" date="2002" name="Proc. Natl. Acad. Sci. U.S.A.">
        <title>Extensive mosaic structure revealed by the complete genome sequence of uropathogenic Escherichia coli.</title>
        <authorList>
            <person name="Welch R.A."/>
            <person name="Burland V."/>
            <person name="Plunkett G. III"/>
            <person name="Redford P."/>
            <person name="Roesch P."/>
            <person name="Rasko D."/>
            <person name="Buckles E.L."/>
            <person name="Liou S.-R."/>
            <person name="Boutin A."/>
            <person name="Hackett J."/>
            <person name="Stroud D."/>
            <person name="Mayhew G.F."/>
            <person name="Rose D.J."/>
            <person name="Zhou S."/>
            <person name="Schwartz D.C."/>
            <person name="Perna N.T."/>
            <person name="Mobley H.L.T."/>
            <person name="Donnenberg M.S."/>
            <person name="Blattner F.R."/>
        </authorList>
    </citation>
    <scope>NUCLEOTIDE SEQUENCE [LARGE SCALE GENOMIC DNA]</scope>
    <source>
        <strain>CFT073 / ATCC 700928 / UPEC</strain>
    </source>
</reference>
<comment type="function">
    <text evidence="1">This is one of the proteins that binds to the 5S RNA in the ribosome where it forms part of the central protuberance.</text>
</comment>
<comment type="subunit">
    <text evidence="1">Part of the 50S ribosomal subunit; part of the 5S rRNA/L5/L18/L25 subcomplex. Contacts the 5S rRNA. Binds to the 5S rRNA independently of L5 and L18.</text>
</comment>
<comment type="similarity">
    <text evidence="1">Belongs to the bacterial ribosomal protein bL25 family.</text>
</comment>
<comment type="sequence caution" evidence="2">
    <conflict type="erroneous initiation">
        <sequence resource="EMBL-CDS" id="AAN81176"/>
    </conflict>
</comment>
<dbReference type="EMBL" id="AE014075">
    <property type="protein sequence ID" value="AAN81176.1"/>
    <property type="status" value="ALT_INIT"/>
    <property type="molecule type" value="Genomic_DNA"/>
</dbReference>
<dbReference type="RefSeq" id="WP_000494186.1">
    <property type="nucleotide sequence ID" value="NZ_CP051263.1"/>
</dbReference>
<dbReference type="SMR" id="Q8FFS1"/>
<dbReference type="STRING" id="199310.c2722"/>
<dbReference type="KEGG" id="ecc:c2722"/>
<dbReference type="eggNOG" id="COG1825">
    <property type="taxonomic scope" value="Bacteria"/>
</dbReference>
<dbReference type="HOGENOM" id="CLU_137946_1_0_6"/>
<dbReference type="Proteomes" id="UP000001410">
    <property type="component" value="Chromosome"/>
</dbReference>
<dbReference type="GO" id="GO:0022625">
    <property type="term" value="C:cytosolic large ribosomal subunit"/>
    <property type="evidence" value="ECO:0007669"/>
    <property type="project" value="TreeGrafter"/>
</dbReference>
<dbReference type="GO" id="GO:0008097">
    <property type="term" value="F:5S rRNA binding"/>
    <property type="evidence" value="ECO:0007669"/>
    <property type="project" value="InterPro"/>
</dbReference>
<dbReference type="GO" id="GO:0003735">
    <property type="term" value="F:structural constituent of ribosome"/>
    <property type="evidence" value="ECO:0007669"/>
    <property type="project" value="InterPro"/>
</dbReference>
<dbReference type="GO" id="GO:0006412">
    <property type="term" value="P:translation"/>
    <property type="evidence" value="ECO:0007669"/>
    <property type="project" value="UniProtKB-UniRule"/>
</dbReference>
<dbReference type="CDD" id="cd00495">
    <property type="entry name" value="Ribosomal_L25_TL5_CTC"/>
    <property type="match status" value="1"/>
</dbReference>
<dbReference type="FunFam" id="2.40.240.10:FF:000002">
    <property type="entry name" value="50S ribosomal protein L25"/>
    <property type="match status" value="1"/>
</dbReference>
<dbReference type="Gene3D" id="2.40.240.10">
    <property type="entry name" value="Ribosomal Protein L25, Chain P"/>
    <property type="match status" value="1"/>
</dbReference>
<dbReference type="HAMAP" id="MF_01336">
    <property type="entry name" value="Ribosomal_bL25"/>
    <property type="match status" value="1"/>
</dbReference>
<dbReference type="InterPro" id="IPR020056">
    <property type="entry name" value="Rbsml_bL25/Gln-tRNA_synth_N"/>
</dbReference>
<dbReference type="InterPro" id="IPR011035">
    <property type="entry name" value="Ribosomal_bL25/Gln-tRNA_synth"/>
</dbReference>
<dbReference type="InterPro" id="IPR020055">
    <property type="entry name" value="Ribosomal_bL25_short"/>
</dbReference>
<dbReference type="InterPro" id="IPR029751">
    <property type="entry name" value="Ribosomal_L25_dom"/>
</dbReference>
<dbReference type="InterPro" id="IPR020930">
    <property type="entry name" value="Ribosomal_uL5_bac-type"/>
</dbReference>
<dbReference type="NCBIfam" id="NF004612">
    <property type="entry name" value="PRK05943.1"/>
    <property type="match status" value="1"/>
</dbReference>
<dbReference type="PANTHER" id="PTHR33284">
    <property type="entry name" value="RIBOSOMAL PROTEIN L25/GLN-TRNA SYNTHETASE, ANTI-CODON-BINDING DOMAIN-CONTAINING PROTEIN"/>
    <property type="match status" value="1"/>
</dbReference>
<dbReference type="PANTHER" id="PTHR33284:SF1">
    <property type="entry name" value="RIBOSOMAL PROTEIN L25_GLN-TRNA SYNTHETASE, ANTI-CODON-BINDING DOMAIN-CONTAINING PROTEIN"/>
    <property type="match status" value="1"/>
</dbReference>
<dbReference type="Pfam" id="PF01386">
    <property type="entry name" value="Ribosomal_L25p"/>
    <property type="match status" value="1"/>
</dbReference>
<dbReference type="SUPFAM" id="SSF50715">
    <property type="entry name" value="Ribosomal protein L25-like"/>
    <property type="match status" value="1"/>
</dbReference>
<organism>
    <name type="scientific">Escherichia coli O6:H1 (strain CFT073 / ATCC 700928 / UPEC)</name>
    <dbReference type="NCBI Taxonomy" id="199310"/>
    <lineage>
        <taxon>Bacteria</taxon>
        <taxon>Pseudomonadati</taxon>
        <taxon>Pseudomonadota</taxon>
        <taxon>Gammaproteobacteria</taxon>
        <taxon>Enterobacterales</taxon>
        <taxon>Enterobacteriaceae</taxon>
        <taxon>Escherichia</taxon>
    </lineage>
</organism>
<evidence type="ECO:0000255" key="1">
    <source>
        <dbReference type="HAMAP-Rule" id="MF_01336"/>
    </source>
</evidence>
<evidence type="ECO:0000305" key="2"/>
<feature type="chain" id="PRO_0000181480" description="Large ribosomal subunit protein bL25">
    <location>
        <begin position="1"/>
        <end position="94"/>
    </location>
</feature>
<accession>Q8FFS1</accession>
<sequence length="94" mass="10692">MFTINAEVRKEQGKGASRRLRAANKFPAIIYGGKEAPLAVELDHDKVMNMQVKAEFYSEVLTIVVDGKEIKVKAQDVQRHPYKPKLLHIDFVRA</sequence>
<proteinExistence type="inferred from homology"/>